<sequence length="440" mass="49571">MENLATLYPAHIIELNRRVAEITAREQLAGLVIHSGQPHRQFLDDLDYPFKVNPHFKAWLPVIDNPHCWLIVNGRDKPQLIFYRPVDFWHKVADLPEDFWTTEIEIKVLTKADKVADLLPGKLQEWAYIGEHLDVADVLGFGSRNPEAVMSYLHYHRASKTAYELACMRRASEIGVRGHVAAKSAFYAGASEFEIQQAYLAATDMGENDVPYGNIIALNQNAAILHYTALEHVSPKQRLSFLIDAGGSFHGYASDITRTYAFEKNLFGDLIAAMDKLQLAIIEMMRPGVKYVDLHLATHQKLAQLLLDFKLVQGDPQGLIEQGITSAFFPHGLGHMLGLQVHDMGGFLHDERGTHIAPPEAHPFLRCTRTLAANQVLTIEPGLYIIDSLLNELKQDGRADWINWQMVDQVRPFGGIRIEDNVIVHSDHNENMTRDLGLHG</sequence>
<proteinExistence type="inferred from homology"/>
<comment type="function">
    <text evidence="1">Splits dipeptides with a prolyl residue in the C-terminal position.</text>
</comment>
<comment type="catalytic activity">
    <reaction evidence="1">
        <text>Xaa-L-Pro dipeptide + H2O = an L-alpha-amino acid + L-proline</text>
        <dbReference type="Rhea" id="RHEA:76407"/>
        <dbReference type="ChEBI" id="CHEBI:15377"/>
        <dbReference type="ChEBI" id="CHEBI:59869"/>
        <dbReference type="ChEBI" id="CHEBI:60039"/>
        <dbReference type="ChEBI" id="CHEBI:195196"/>
        <dbReference type="EC" id="3.4.13.9"/>
    </reaction>
</comment>
<comment type="cofactor">
    <cofactor evidence="1">
        <name>Mn(2+)</name>
        <dbReference type="ChEBI" id="CHEBI:29035"/>
    </cofactor>
    <text evidence="1">Binds 2 manganese ions per subunit.</text>
</comment>
<comment type="similarity">
    <text evidence="1">Belongs to the peptidase M24B family. Bacterial-type prolidase subfamily.</text>
</comment>
<keyword id="KW-0224">Dipeptidase</keyword>
<keyword id="KW-0378">Hydrolase</keyword>
<keyword id="KW-0464">Manganese</keyword>
<keyword id="KW-0479">Metal-binding</keyword>
<keyword id="KW-0482">Metalloprotease</keyword>
<keyword id="KW-0645">Protease</keyword>
<keyword id="KW-1185">Reference proteome</keyword>
<gene>
    <name evidence="1" type="primary">pepQ</name>
    <name type="ordered locus">Shew_0020</name>
</gene>
<feature type="chain" id="PRO_0000303860" description="Xaa-Pro dipeptidase">
    <location>
        <begin position="1"/>
        <end position="440"/>
    </location>
</feature>
<feature type="binding site" evidence="1">
    <location>
        <position position="244"/>
    </location>
    <ligand>
        <name>Mn(2+)</name>
        <dbReference type="ChEBI" id="CHEBI:29035"/>
        <label>2</label>
    </ligand>
</feature>
<feature type="binding site" evidence="1">
    <location>
        <position position="255"/>
    </location>
    <ligand>
        <name>Mn(2+)</name>
        <dbReference type="ChEBI" id="CHEBI:29035"/>
        <label>1</label>
    </ligand>
</feature>
<feature type="binding site" evidence="1">
    <location>
        <position position="255"/>
    </location>
    <ligand>
        <name>Mn(2+)</name>
        <dbReference type="ChEBI" id="CHEBI:29035"/>
        <label>2</label>
    </ligand>
</feature>
<feature type="binding site" evidence="1">
    <location>
        <position position="335"/>
    </location>
    <ligand>
        <name>Mn(2+)</name>
        <dbReference type="ChEBI" id="CHEBI:29035"/>
        <label>1</label>
    </ligand>
</feature>
<feature type="binding site" evidence="1">
    <location>
        <position position="380"/>
    </location>
    <ligand>
        <name>Mn(2+)</name>
        <dbReference type="ChEBI" id="CHEBI:29035"/>
        <label>1</label>
    </ligand>
</feature>
<feature type="binding site" evidence="1">
    <location>
        <position position="419"/>
    </location>
    <ligand>
        <name>Mn(2+)</name>
        <dbReference type="ChEBI" id="CHEBI:29035"/>
        <label>1</label>
    </ligand>
</feature>
<feature type="binding site" evidence="1">
    <location>
        <position position="419"/>
    </location>
    <ligand>
        <name>Mn(2+)</name>
        <dbReference type="ChEBI" id="CHEBI:29035"/>
        <label>2</label>
    </ligand>
</feature>
<evidence type="ECO:0000255" key="1">
    <source>
        <dbReference type="HAMAP-Rule" id="MF_01279"/>
    </source>
</evidence>
<reference key="1">
    <citation type="submission" date="2007-03" db="EMBL/GenBank/DDBJ databases">
        <title>Complete sequence of Shewanella loihica PV-4.</title>
        <authorList>
            <consortium name="US DOE Joint Genome Institute"/>
            <person name="Copeland A."/>
            <person name="Lucas S."/>
            <person name="Lapidus A."/>
            <person name="Barry K."/>
            <person name="Detter J.C."/>
            <person name="Glavina del Rio T."/>
            <person name="Hammon N."/>
            <person name="Israni S."/>
            <person name="Dalin E."/>
            <person name="Tice H."/>
            <person name="Pitluck S."/>
            <person name="Chain P."/>
            <person name="Malfatti S."/>
            <person name="Shin M."/>
            <person name="Vergez L."/>
            <person name="Schmutz J."/>
            <person name="Larimer F."/>
            <person name="Land M."/>
            <person name="Hauser L."/>
            <person name="Kyrpides N."/>
            <person name="Mikhailova N."/>
            <person name="Romine M.F."/>
            <person name="Serres G."/>
            <person name="Fredrickson J."/>
            <person name="Tiedje J."/>
            <person name="Richardson P."/>
        </authorList>
    </citation>
    <scope>NUCLEOTIDE SEQUENCE [LARGE SCALE GENOMIC DNA]</scope>
    <source>
        <strain>ATCC BAA-1088 / PV-4</strain>
    </source>
</reference>
<name>PEPQ_SHELP</name>
<organism>
    <name type="scientific">Shewanella loihica (strain ATCC BAA-1088 / PV-4)</name>
    <dbReference type="NCBI Taxonomy" id="323850"/>
    <lineage>
        <taxon>Bacteria</taxon>
        <taxon>Pseudomonadati</taxon>
        <taxon>Pseudomonadota</taxon>
        <taxon>Gammaproteobacteria</taxon>
        <taxon>Alteromonadales</taxon>
        <taxon>Shewanellaceae</taxon>
        <taxon>Shewanella</taxon>
    </lineage>
</organism>
<dbReference type="EC" id="3.4.13.9" evidence="1"/>
<dbReference type="EMBL" id="CP000606">
    <property type="protein sequence ID" value="ABO21893.1"/>
    <property type="molecule type" value="Genomic_DNA"/>
</dbReference>
<dbReference type="RefSeq" id="WP_011863830.1">
    <property type="nucleotide sequence ID" value="NC_009092.1"/>
</dbReference>
<dbReference type="SMR" id="A3Q8U5"/>
<dbReference type="STRING" id="323850.Shew_0020"/>
<dbReference type="MEROPS" id="M24.003"/>
<dbReference type="KEGG" id="slo:Shew_0020"/>
<dbReference type="eggNOG" id="COG0006">
    <property type="taxonomic scope" value="Bacteria"/>
</dbReference>
<dbReference type="HOGENOM" id="CLU_050675_0_0_6"/>
<dbReference type="OrthoDB" id="9806388at2"/>
<dbReference type="Proteomes" id="UP000001558">
    <property type="component" value="Chromosome"/>
</dbReference>
<dbReference type="GO" id="GO:0005829">
    <property type="term" value="C:cytosol"/>
    <property type="evidence" value="ECO:0007669"/>
    <property type="project" value="TreeGrafter"/>
</dbReference>
<dbReference type="GO" id="GO:0004177">
    <property type="term" value="F:aminopeptidase activity"/>
    <property type="evidence" value="ECO:0007669"/>
    <property type="project" value="TreeGrafter"/>
</dbReference>
<dbReference type="GO" id="GO:0046872">
    <property type="term" value="F:metal ion binding"/>
    <property type="evidence" value="ECO:0007669"/>
    <property type="project" value="UniProtKB-KW"/>
</dbReference>
<dbReference type="GO" id="GO:0008235">
    <property type="term" value="F:metalloexopeptidase activity"/>
    <property type="evidence" value="ECO:0007669"/>
    <property type="project" value="UniProtKB-UniRule"/>
</dbReference>
<dbReference type="GO" id="GO:0016795">
    <property type="term" value="F:phosphoric triester hydrolase activity"/>
    <property type="evidence" value="ECO:0007669"/>
    <property type="project" value="InterPro"/>
</dbReference>
<dbReference type="GO" id="GO:0102009">
    <property type="term" value="F:proline dipeptidase activity"/>
    <property type="evidence" value="ECO:0007669"/>
    <property type="project" value="UniProtKB-EC"/>
</dbReference>
<dbReference type="GO" id="GO:0006508">
    <property type="term" value="P:proteolysis"/>
    <property type="evidence" value="ECO:0007669"/>
    <property type="project" value="UniProtKB-KW"/>
</dbReference>
<dbReference type="CDD" id="cd01087">
    <property type="entry name" value="Prolidase"/>
    <property type="match status" value="1"/>
</dbReference>
<dbReference type="Gene3D" id="3.90.230.10">
    <property type="entry name" value="Creatinase/methionine aminopeptidase superfamily"/>
    <property type="match status" value="1"/>
</dbReference>
<dbReference type="Gene3D" id="3.40.350.10">
    <property type="entry name" value="Creatinase/prolidase N-terminal domain"/>
    <property type="match status" value="1"/>
</dbReference>
<dbReference type="HAMAP" id="MF_01279">
    <property type="entry name" value="X_Pro_dipeptid"/>
    <property type="match status" value="1"/>
</dbReference>
<dbReference type="InterPro" id="IPR029149">
    <property type="entry name" value="Creatin/AminoP/Spt16_N"/>
</dbReference>
<dbReference type="InterPro" id="IPR036005">
    <property type="entry name" value="Creatinase/aminopeptidase-like"/>
</dbReference>
<dbReference type="InterPro" id="IPR048819">
    <property type="entry name" value="PepQ_N"/>
</dbReference>
<dbReference type="InterPro" id="IPR000994">
    <property type="entry name" value="Pept_M24"/>
</dbReference>
<dbReference type="InterPro" id="IPR001131">
    <property type="entry name" value="Peptidase_M24B_aminopep-P_CS"/>
</dbReference>
<dbReference type="InterPro" id="IPR052433">
    <property type="entry name" value="X-Pro_dipept-like"/>
</dbReference>
<dbReference type="InterPro" id="IPR022846">
    <property type="entry name" value="X_Pro_dipept"/>
</dbReference>
<dbReference type="NCBIfam" id="NF010133">
    <property type="entry name" value="PRK13607.1"/>
    <property type="match status" value="1"/>
</dbReference>
<dbReference type="PANTHER" id="PTHR43226">
    <property type="entry name" value="XAA-PRO AMINOPEPTIDASE 3"/>
    <property type="match status" value="1"/>
</dbReference>
<dbReference type="PANTHER" id="PTHR43226:SF8">
    <property type="entry name" value="XAA-PRO DIPEPTIDASE"/>
    <property type="match status" value="1"/>
</dbReference>
<dbReference type="Pfam" id="PF21216">
    <property type="entry name" value="PepQ_N"/>
    <property type="match status" value="1"/>
</dbReference>
<dbReference type="Pfam" id="PF00557">
    <property type="entry name" value="Peptidase_M24"/>
    <property type="match status" value="1"/>
</dbReference>
<dbReference type="SUPFAM" id="SSF55920">
    <property type="entry name" value="Creatinase/aminopeptidase"/>
    <property type="match status" value="1"/>
</dbReference>
<dbReference type="PROSITE" id="PS00491">
    <property type="entry name" value="PROLINE_PEPTIDASE"/>
    <property type="match status" value="1"/>
</dbReference>
<accession>A3Q8U5</accession>
<protein>
    <recommendedName>
        <fullName evidence="1">Xaa-Pro dipeptidase</fullName>
        <shortName evidence="1">X-Pro dipeptidase</shortName>
        <ecNumber evidence="1">3.4.13.9</ecNumber>
    </recommendedName>
    <alternativeName>
        <fullName evidence="1">Imidodipeptidase</fullName>
    </alternativeName>
    <alternativeName>
        <fullName evidence="1">Proline dipeptidase</fullName>
        <shortName evidence="1">Prolidase</shortName>
    </alternativeName>
</protein>